<accession>Q6TYA8</accession>
<evidence type="ECO:0000250" key="1">
    <source>
        <dbReference type="UniProtKB" id="P08050"/>
    </source>
</evidence>
<evidence type="ECO:0000250" key="2">
    <source>
        <dbReference type="UniProtKB" id="P17302"/>
    </source>
</evidence>
<evidence type="ECO:0000250" key="3">
    <source>
        <dbReference type="UniProtKB" id="P23242"/>
    </source>
</evidence>
<evidence type="ECO:0000250" key="4">
    <source>
        <dbReference type="UniProtKB" id="Q6TYA7"/>
    </source>
</evidence>
<evidence type="ECO:0000255" key="5"/>
<evidence type="ECO:0000256" key="6">
    <source>
        <dbReference type="SAM" id="MobiDB-lite"/>
    </source>
</evidence>
<evidence type="ECO:0000305" key="7"/>
<feature type="initiator methionine" description="Removed" evidence="1">
    <location>
        <position position="1"/>
    </location>
</feature>
<feature type="chain" id="PRO_0000312999" description="Gap junction alpha-1 protein">
    <location>
        <begin position="2"/>
        <end position="382"/>
    </location>
</feature>
<feature type="topological domain" description="Cytoplasmic" evidence="1">
    <location>
        <begin position="2"/>
        <end position="23"/>
    </location>
</feature>
<feature type="transmembrane region" description="Helical" evidence="5">
    <location>
        <begin position="24"/>
        <end position="44"/>
    </location>
</feature>
<feature type="topological domain" description="Extracellular" evidence="1">
    <location>
        <begin position="45"/>
        <end position="76"/>
    </location>
</feature>
<feature type="transmembrane region" description="Helical" evidence="5">
    <location>
        <begin position="77"/>
        <end position="97"/>
    </location>
</feature>
<feature type="topological domain" description="Cytoplasmic" evidence="1">
    <location>
        <begin position="98"/>
        <end position="155"/>
    </location>
</feature>
<feature type="transmembrane region" description="Helical" evidence="5">
    <location>
        <begin position="156"/>
        <end position="176"/>
    </location>
</feature>
<feature type="topological domain" description="Extracellular" evidence="1">
    <location>
        <begin position="177"/>
        <end position="207"/>
    </location>
</feature>
<feature type="transmembrane region" description="Helical" evidence="5">
    <location>
        <begin position="208"/>
        <end position="228"/>
    </location>
</feature>
<feature type="topological domain" description="Cytoplasmic" evidence="1">
    <location>
        <begin position="229"/>
        <end position="382"/>
    </location>
</feature>
<feature type="region of interest" description="Interaction with NOV" evidence="1">
    <location>
        <begin position="244"/>
        <end position="382"/>
    </location>
</feature>
<feature type="region of interest" description="Interaction with UBQLN4" evidence="3">
    <location>
        <begin position="264"/>
        <end position="382"/>
    </location>
</feature>
<feature type="region of interest" description="Disordered" evidence="6">
    <location>
        <begin position="317"/>
        <end position="382"/>
    </location>
</feature>
<feature type="compositionally biased region" description="Polar residues" evidence="6">
    <location>
        <begin position="317"/>
        <end position="332"/>
    </location>
</feature>
<feature type="compositionally biased region" description="Low complexity" evidence="6">
    <location>
        <begin position="362"/>
        <end position="374"/>
    </location>
</feature>
<feature type="modified residue" description="Phosphoserine" evidence="1">
    <location>
        <position position="5"/>
    </location>
</feature>
<feature type="modified residue" description="Phosphotyrosine" evidence="3">
    <location>
        <position position="247"/>
    </location>
</feature>
<feature type="modified residue" description="Phosphoserine" evidence="2">
    <location>
        <position position="255"/>
    </location>
</feature>
<feature type="modified residue" description="Phosphoserine" evidence="1">
    <location>
        <position position="257"/>
    </location>
</feature>
<feature type="modified residue" description="Phosphoserine" evidence="2">
    <location>
        <position position="262"/>
    </location>
</feature>
<feature type="modified residue" description="S-nitrosocysteine" evidence="3">
    <location>
        <position position="271"/>
    </location>
</feature>
<feature type="modified residue" description="Phosphothreonine" evidence="3">
    <location>
        <position position="275"/>
    </location>
</feature>
<feature type="modified residue" description="Phosphoserine" evidence="3">
    <location>
        <position position="306"/>
    </location>
</feature>
<feature type="modified residue" description="Phosphoserine" evidence="2">
    <location>
        <position position="314"/>
    </location>
</feature>
<feature type="modified residue" description="Phosphoserine; by CK1" evidence="2">
    <location>
        <position position="325"/>
    </location>
</feature>
<feature type="modified residue" description="Phosphothreonine" evidence="3">
    <location>
        <position position="326"/>
    </location>
</feature>
<feature type="modified residue" description="Phosphoserine; by CK1" evidence="2">
    <location>
        <position position="328"/>
    </location>
</feature>
<feature type="modified residue" description="Phosphoserine; by CK1" evidence="2">
    <location>
        <position position="330"/>
    </location>
</feature>
<feature type="modified residue" description="Phosphoserine" evidence="2">
    <location>
        <position position="344"/>
    </location>
</feature>
<feature type="modified residue" description="Phosphoserine" evidence="3">
    <location>
        <position position="365"/>
    </location>
</feature>
<feature type="modified residue" description="Phosphoserine; by PKC/PRKCG and PKC/PRKCD" evidence="3">
    <location>
        <position position="368"/>
    </location>
</feature>
<feature type="modified residue" description="Phosphoserine" evidence="3">
    <location>
        <position position="369"/>
    </location>
</feature>
<feature type="modified residue" description="Phosphoserine" evidence="1">
    <location>
        <position position="373"/>
    </location>
</feature>
<feature type="disulfide bond" evidence="2">
    <location>
        <begin position="54"/>
        <end position="192"/>
    </location>
</feature>
<feature type="disulfide bond" evidence="2">
    <location>
        <begin position="187"/>
        <end position="198"/>
    </location>
</feature>
<feature type="cross-link" description="Glycyl lysine isopeptide (Lys-Gly) (interchain with G-Cter in SUMO)" evidence="2">
    <location>
        <position position="144"/>
    </location>
</feature>
<feature type="cross-link" description="Glycyl lysine isopeptide (Lys-Gly) (interchain with G-Cter in SUMO)" evidence="2">
    <location>
        <position position="237"/>
    </location>
</feature>
<name>CXA1_ERIEU</name>
<comment type="function">
    <text evidence="1 3">Gap junction protein that acts as a regulator of bladder capacity. A gap junction consists of a cluster of closely packed pairs of transmembrane channels, the connexons, through which materials of low MW diffuse from one cell to a neighboring cell. May play a critical role in the physiology of hearing by participating in the recycling of potassium to the cochlear endolymph. Negative regulator of bladder functional capacity: acts by enhancing intercellular electrical and chemical transmission, thus sensitizing bladder muscles to cholinergic neural stimuli and causing them to contract. May play a role in cell growth inhibition through the regulation of NOV expression and localization. Plays an essential role in gap junction communication in the ventricles (By similarity).</text>
</comment>
<comment type="subunit">
    <text evidence="1 2 3">A connexon is composed of a hexamer of connexins. Interacts with SGSM3 (By similarity). Interacts with RIC1/CIP150 (By similarity). Interacts with CNST and CSNK1D (By similarity). Interacts (via C-terminus) with TJP1. Interacts (via C-terminus) with SRC (via SH3 domain). Interacts (not ubiquitinated) with UBQLN4 (via UBA domain) (By similarity). Interacts with NOV. Interacts with TMEM65 (By similarity). Interacts with ANK3/ANKG and PKP2 (By similarity).</text>
</comment>
<comment type="subcellular location">
    <subcellularLocation>
        <location evidence="2">Cell membrane</location>
        <topology evidence="5">Multi-pass membrane protein</topology>
    </subcellularLocation>
    <subcellularLocation>
        <location evidence="2">Cell junction</location>
        <location evidence="2">Gap junction</location>
    </subcellularLocation>
    <subcellularLocation>
        <location evidence="3">Endoplasmic reticulum</location>
    </subcellularLocation>
    <text evidence="3">Localizes at the intercalated disk (ICD) in cardiomyocytes and the proper localization at ICD is dependent on TMEM65.</text>
</comment>
<comment type="PTM">
    <text evidence="1 2 4">Phosphorylation at Ser-325, Ser-328 and Ser-330 by CK1 modulates gap junction assembly. Phosphorylated at Ser-368 by PRKCG; phosphorylation induces disassembly of gap junction plaques and inhibition of gap junction activity. Phosphorylation at Ser-368 by PRKCD triggers its internalization into small vesicles leading to proteasome-mediated degradation (By similarity).</text>
</comment>
<comment type="PTM">
    <text evidence="2">Sumoylated with SUMO1, SUMO2 and SUMO3, which may regulate the level of functional Cx43 gap junctions at the plasma membrane. May be desumoylated by SENP1 or SENP2 (By similarity).</text>
</comment>
<comment type="PTM">
    <text evidence="3">S-nitrosylation at Cys-271 is enriched at the muscle endothelial gap junction in arteries, it augments channel permeability and may regulate of smooth muscle cell to endothelial cell communication.</text>
</comment>
<comment type="PTM">
    <text evidence="3">Acetylated in the developing cortex; leading to delocalization from the cell membrane.</text>
</comment>
<comment type="similarity">
    <text evidence="7">Belongs to the connexin family. Alpha-type (group II) subfamily.</text>
</comment>
<dbReference type="EMBL" id="AY382589">
    <property type="protein sequence ID" value="AAR33083.1"/>
    <property type="molecule type" value="Genomic_DNA"/>
</dbReference>
<dbReference type="SMR" id="Q6TYA8"/>
<dbReference type="FunCoup" id="Q6TYA8">
    <property type="interactions" value="299"/>
</dbReference>
<dbReference type="eggNOG" id="ENOG502QRAE">
    <property type="taxonomic scope" value="Eukaryota"/>
</dbReference>
<dbReference type="InParanoid" id="Q6TYA8"/>
<dbReference type="Proteomes" id="UP000079721">
    <property type="component" value="Unplaced"/>
</dbReference>
<dbReference type="GO" id="GO:0016324">
    <property type="term" value="C:apical plasma membrane"/>
    <property type="evidence" value="ECO:0000250"/>
    <property type="project" value="UniProtKB"/>
</dbReference>
<dbReference type="GO" id="GO:0030054">
    <property type="term" value="C:cell junction"/>
    <property type="evidence" value="ECO:0000250"/>
    <property type="project" value="UniProtKB"/>
</dbReference>
<dbReference type="GO" id="GO:0005922">
    <property type="term" value="C:connexin complex"/>
    <property type="evidence" value="ECO:0000250"/>
    <property type="project" value="UniProtKB"/>
</dbReference>
<dbReference type="GO" id="GO:0005783">
    <property type="term" value="C:endoplasmic reticulum"/>
    <property type="evidence" value="ECO:0007669"/>
    <property type="project" value="UniProtKB-SubCell"/>
</dbReference>
<dbReference type="GO" id="GO:0014704">
    <property type="term" value="C:intercalated disc"/>
    <property type="evidence" value="ECO:0000250"/>
    <property type="project" value="UniProtKB"/>
</dbReference>
<dbReference type="GO" id="GO:0005739">
    <property type="term" value="C:mitochondrion"/>
    <property type="evidence" value="ECO:0000250"/>
    <property type="project" value="UniProtKB"/>
</dbReference>
<dbReference type="GO" id="GO:0005886">
    <property type="term" value="C:plasma membrane"/>
    <property type="evidence" value="ECO:0000250"/>
    <property type="project" value="UniProtKB"/>
</dbReference>
<dbReference type="GO" id="GO:0055077">
    <property type="term" value="F:gap junction hemi-channel activity"/>
    <property type="evidence" value="ECO:0000250"/>
    <property type="project" value="UniProtKB"/>
</dbReference>
<dbReference type="GO" id="GO:0010644">
    <property type="term" value="P:cell communication by electrical coupling"/>
    <property type="evidence" value="ECO:0007669"/>
    <property type="project" value="TreeGrafter"/>
</dbReference>
<dbReference type="GO" id="GO:0007267">
    <property type="term" value="P:cell-cell signaling"/>
    <property type="evidence" value="ECO:0007669"/>
    <property type="project" value="InterPro"/>
</dbReference>
<dbReference type="GO" id="GO:0007507">
    <property type="term" value="P:heart development"/>
    <property type="evidence" value="ECO:0007669"/>
    <property type="project" value="InterPro"/>
</dbReference>
<dbReference type="GO" id="GO:0099111">
    <property type="term" value="P:microtubule-based transport"/>
    <property type="evidence" value="ECO:0000250"/>
    <property type="project" value="UniProtKB"/>
</dbReference>
<dbReference type="GO" id="GO:0030308">
    <property type="term" value="P:negative regulation of cell growth"/>
    <property type="evidence" value="ECO:0000250"/>
    <property type="project" value="UniProtKB"/>
</dbReference>
<dbReference type="FunFam" id="1.20.1440.80:FF:000001">
    <property type="entry name" value="Gap junction alpha-1"/>
    <property type="match status" value="1"/>
</dbReference>
<dbReference type="FunFam" id="1.20.5.1130:FF:000001">
    <property type="entry name" value="Gap junction alpha-1"/>
    <property type="match status" value="1"/>
</dbReference>
<dbReference type="Gene3D" id="1.20.5.1130">
    <property type="entry name" value="Connexin43"/>
    <property type="match status" value="1"/>
</dbReference>
<dbReference type="Gene3D" id="1.20.1440.80">
    <property type="entry name" value="Gap junction channel protein cysteine-rich domain"/>
    <property type="match status" value="1"/>
</dbReference>
<dbReference type="InterPro" id="IPR035091">
    <property type="entry name" value="Alpha_helix_dom_sf"/>
</dbReference>
<dbReference type="InterPro" id="IPR000500">
    <property type="entry name" value="Connexin"/>
</dbReference>
<dbReference type="InterPro" id="IPR002261">
    <property type="entry name" value="Connexin43"/>
</dbReference>
<dbReference type="InterPro" id="IPR013124">
    <property type="entry name" value="Connexin43_C"/>
</dbReference>
<dbReference type="InterPro" id="IPR034634">
    <property type="entry name" value="Connexin_C"/>
</dbReference>
<dbReference type="InterPro" id="IPR019570">
    <property type="entry name" value="Connexin_CCC"/>
</dbReference>
<dbReference type="InterPro" id="IPR017990">
    <property type="entry name" value="Connexin_CS"/>
</dbReference>
<dbReference type="InterPro" id="IPR013092">
    <property type="entry name" value="Connexin_N"/>
</dbReference>
<dbReference type="InterPro" id="IPR038359">
    <property type="entry name" value="Connexin_N_sf"/>
</dbReference>
<dbReference type="PANTHER" id="PTHR11984">
    <property type="entry name" value="CONNEXIN"/>
    <property type="match status" value="1"/>
</dbReference>
<dbReference type="PANTHER" id="PTHR11984:SF33">
    <property type="entry name" value="GAP JUNCTION ALPHA-1 PROTEIN"/>
    <property type="match status" value="1"/>
</dbReference>
<dbReference type="Pfam" id="PF00029">
    <property type="entry name" value="Connexin"/>
    <property type="match status" value="1"/>
</dbReference>
<dbReference type="Pfam" id="PF03508">
    <property type="entry name" value="Connexin43"/>
    <property type="match status" value="1"/>
</dbReference>
<dbReference type="PRINTS" id="PR00206">
    <property type="entry name" value="CONNEXIN"/>
</dbReference>
<dbReference type="PRINTS" id="PR01132">
    <property type="entry name" value="CONNEXINA1"/>
</dbReference>
<dbReference type="SMART" id="SM00037">
    <property type="entry name" value="CNX"/>
    <property type="match status" value="1"/>
</dbReference>
<dbReference type="SMART" id="SM01089">
    <property type="entry name" value="Connexin_CCC"/>
    <property type="match status" value="1"/>
</dbReference>
<dbReference type="SUPFAM" id="SSF118220">
    <property type="entry name" value="Connexin43"/>
    <property type="match status" value="1"/>
</dbReference>
<dbReference type="PROSITE" id="PS00407">
    <property type="entry name" value="CONNEXINS_1"/>
    <property type="match status" value="1"/>
</dbReference>
<dbReference type="PROSITE" id="PS00408">
    <property type="entry name" value="CONNEXINS_2"/>
    <property type="match status" value="1"/>
</dbReference>
<sequence>MGDWSALGKLLDKVQAYSTAGGKVWLSVLFIFRILLLGTAVESAWGDEQSAFRCNTQQPGCENVCYDKSFPISHVRFWVLQIIFVSVPTLLYLAHVFYVMRKEEKLNKKEEELKVAQTDGANVDMHLKQIEIKKFKYGIEEHGKVKMRGGLLRTYIISILFKSVFEVAFLLIQWYIYGFSLSAVYTCKRDPCPHQVDCFLSRPTEKTIFIIFMLVVSLVSLALNIIELFYVFFKGIKDRVKGKSDLYHATTGPLSPSKDRGSPTYAYFNGCSSPTAPLSPMSPPGYKLVTGDRNNSSCRNYNKQASEQNWANYSAEQNRMGQAGSTISNSHAQPFDFPDDAQNSKKLAAGHELQPLAIVDQRPSSRASSRASSRPRPDDLEI</sequence>
<proteinExistence type="inferred from homology"/>
<gene>
    <name type="primary">GJA1</name>
</gene>
<reference key="1">
    <citation type="journal article" date="2004" name="Dev. Genes Evol.">
        <title>Connexin43 orthologues in vertebrates: phylogeny from fish to man.</title>
        <authorList>
            <person name="van der Heyden M.A."/>
            <person name="van Eijk M."/>
            <person name="Wilders R."/>
            <person name="de Bakker J.M."/>
            <person name="Opthof T."/>
        </authorList>
    </citation>
    <scope>NUCLEOTIDE SEQUENCE [GENOMIC DNA]</scope>
</reference>
<keyword id="KW-0007">Acetylation</keyword>
<keyword id="KW-0965">Cell junction</keyword>
<keyword id="KW-1003">Cell membrane</keyword>
<keyword id="KW-1015">Disulfide bond</keyword>
<keyword id="KW-0256">Endoplasmic reticulum</keyword>
<keyword id="KW-0303">Gap junction</keyword>
<keyword id="KW-1017">Isopeptide bond</keyword>
<keyword id="KW-0472">Membrane</keyword>
<keyword id="KW-0597">Phosphoprotein</keyword>
<keyword id="KW-1185">Reference proteome</keyword>
<keyword id="KW-0702">S-nitrosylation</keyword>
<keyword id="KW-0812">Transmembrane</keyword>
<keyword id="KW-1133">Transmembrane helix</keyword>
<keyword id="KW-0832">Ubl conjugation</keyword>
<organism>
    <name type="scientific">Erinaceus europaeus</name>
    <name type="common">Western European hedgehog</name>
    <dbReference type="NCBI Taxonomy" id="9365"/>
    <lineage>
        <taxon>Eukaryota</taxon>
        <taxon>Metazoa</taxon>
        <taxon>Chordata</taxon>
        <taxon>Craniata</taxon>
        <taxon>Vertebrata</taxon>
        <taxon>Euteleostomi</taxon>
        <taxon>Mammalia</taxon>
        <taxon>Eutheria</taxon>
        <taxon>Laurasiatheria</taxon>
        <taxon>Eulipotyphla</taxon>
        <taxon>Erinaceidae</taxon>
        <taxon>Erinaceinae</taxon>
        <taxon>Erinaceus</taxon>
    </lineage>
</organism>
<protein>
    <recommendedName>
        <fullName>Gap junction alpha-1 protein</fullName>
    </recommendedName>
    <alternativeName>
        <fullName>Connexin-43</fullName>
        <shortName>Cx43</shortName>
    </alternativeName>
</protein>